<dbReference type="EC" id="5.1.1.3" evidence="1"/>
<dbReference type="EMBL" id="CP000446">
    <property type="protein sequence ID" value="ABI37260.1"/>
    <property type="molecule type" value="Genomic_DNA"/>
</dbReference>
<dbReference type="RefSeq" id="WP_011621011.1">
    <property type="nucleotide sequence ID" value="NC_008321.1"/>
</dbReference>
<dbReference type="SMR" id="Q0HNV7"/>
<dbReference type="KEGG" id="she:Shewmr4_0179"/>
<dbReference type="HOGENOM" id="CLU_052344_2_0_6"/>
<dbReference type="UniPathway" id="UPA00219"/>
<dbReference type="GO" id="GO:0008881">
    <property type="term" value="F:glutamate racemase activity"/>
    <property type="evidence" value="ECO:0007669"/>
    <property type="project" value="UniProtKB-UniRule"/>
</dbReference>
<dbReference type="GO" id="GO:0071555">
    <property type="term" value="P:cell wall organization"/>
    <property type="evidence" value="ECO:0007669"/>
    <property type="project" value="UniProtKB-KW"/>
</dbReference>
<dbReference type="GO" id="GO:0009252">
    <property type="term" value="P:peptidoglycan biosynthetic process"/>
    <property type="evidence" value="ECO:0007669"/>
    <property type="project" value="UniProtKB-UniRule"/>
</dbReference>
<dbReference type="GO" id="GO:0008360">
    <property type="term" value="P:regulation of cell shape"/>
    <property type="evidence" value="ECO:0007669"/>
    <property type="project" value="UniProtKB-KW"/>
</dbReference>
<dbReference type="FunFam" id="3.40.50.1860:FF:000001">
    <property type="entry name" value="Glutamate racemase"/>
    <property type="match status" value="1"/>
</dbReference>
<dbReference type="Gene3D" id="3.40.50.1860">
    <property type="match status" value="2"/>
</dbReference>
<dbReference type="HAMAP" id="MF_00258">
    <property type="entry name" value="Glu_racemase"/>
    <property type="match status" value="1"/>
</dbReference>
<dbReference type="InterPro" id="IPR015942">
    <property type="entry name" value="Asp/Glu/hydantoin_racemase"/>
</dbReference>
<dbReference type="InterPro" id="IPR001920">
    <property type="entry name" value="Asp/Glu_race"/>
</dbReference>
<dbReference type="InterPro" id="IPR018187">
    <property type="entry name" value="Asp/Glu_racemase_AS_1"/>
</dbReference>
<dbReference type="InterPro" id="IPR033134">
    <property type="entry name" value="Asp/Glu_racemase_AS_2"/>
</dbReference>
<dbReference type="InterPro" id="IPR004391">
    <property type="entry name" value="Glu_race"/>
</dbReference>
<dbReference type="NCBIfam" id="TIGR00067">
    <property type="entry name" value="glut_race"/>
    <property type="match status" value="1"/>
</dbReference>
<dbReference type="PANTHER" id="PTHR21198">
    <property type="entry name" value="GLUTAMATE RACEMASE"/>
    <property type="match status" value="1"/>
</dbReference>
<dbReference type="PANTHER" id="PTHR21198:SF2">
    <property type="entry name" value="GLUTAMATE RACEMASE"/>
    <property type="match status" value="1"/>
</dbReference>
<dbReference type="Pfam" id="PF01177">
    <property type="entry name" value="Asp_Glu_race"/>
    <property type="match status" value="1"/>
</dbReference>
<dbReference type="SUPFAM" id="SSF53681">
    <property type="entry name" value="Aspartate/glutamate racemase"/>
    <property type="match status" value="2"/>
</dbReference>
<dbReference type="PROSITE" id="PS00923">
    <property type="entry name" value="ASP_GLU_RACEMASE_1"/>
    <property type="match status" value="1"/>
</dbReference>
<dbReference type="PROSITE" id="PS00924">
    <property type="entry name" value="ASP_GLU_RACEMASE_2"/>
    <property type="match status" value="1"/>
</dbReference>
<accession>Q0HNV7</accession>
<proteinExistence type="inferred from homology"/>
<evidence type="ECO:0000255" key="1">
    <source>
        <dbReference type="HAMAP-Rule" id="MF_00258"/>
    </source>
</evidence>
<organism>
    <name type="scientific">Shewanella sp. (strain MR-4)</name>
    <dbReference type="NCBI Taxonomy" id="60480"/>
    <lineage>
        <taxon>Bacteria</taxon>
        <taxon>Pseudomonadati</taxon>
        <taxon>Pseudomonadota</taxon>
        <taxon>Gammaproteobacteria</taxon>
        <taxon>Alteromonadales</taxon>
        <taxon>Shewanellaceae</taxon>
        <taxon>Shewanella</taxon>
    </lineage>
</organism>
<protein>
    <recommendedName>
        <fullName evidence="1">Glutamate racemase</fullName>
        <ecNumber evidence="1">5.1.1.3</ecNumber>
    </recommendedName>
</protein>
<comment type="function">
    <text evidence="1">Provides the (R)-glutamate required for cell wall biosynthesis.</text>
</comment>
<comment type="catalytic activity">
    <reaction evidence="1">
        <text>L-glutamate = D-glutamate</text>
        <dbReference type="Rhea" id="RHEA:12813"/>
        <dbReference type="ChEBI" id="CHEBI:29985"/>
        <dbReference type="ChEBI" id="CHEBI:29986"/>
        <dbReference type="EC" id="5.1.1.3"/>
    </reaction>
</comment>
<comment type="pathway">
    <text evidence="1">Cell wall biogenesis; peptidoglycan biosynthesis.</text>
</comment>
<comment type="similarity">
    <text evidence="1">Belongs to the aspartate/glutamate racemases family.</text>
</comment>
<sequence length="272" mass="29549">MSQPILVFDSGIGGLSVLAEIRKLLPHHDYCYLFDNARLPYGELEEQELVSGCVALIDQVVERTHAAIVVVACNTASTVVLPALRATLSIPVVGVVPAIKPAAQLSKSKRIGLLATPGTVKRHYTYELISQFADDCHVELFGSSELVLMAEQKIATGQLDMARLTQVLSPIVTADLDVLVLGCTHFPMLRDELQQVLGKGVTLLDSGEAIAKRVKTLLAETKSEQQVQEDANRDSVMQAFYTKAKISEGLVSMLVDCGFSTLERITTINSNR</sequence>
<keyword id="KW-0133">Cell shape</keyword>
<keyword id="KW-0961">Cell wall biogenesis/degradation</keyword>
<keyword id="KW-0413">Isomerase</keyword>
<keyword id="KW-0573">Peptidoglycan synthesis</keyword>
<gene>
    <name evidence="1" type="primary">murI</name>
    <name type="ordered locus">Shewmr4_0179</name>
</gene>
<reference key="1">
    <citation type="submission" date="2006-08" db="EMBL/GenBank/DDBJ databases">
        <title>Complete sequence of Shewanella sp. MR-4.</title>
        <authorList>
            <consortium name="US DOE Joint Genome Institute"/>
            <person name="Copeland A."/>
            <person name="Lucas S."/>
            <person name="Lapidus A."/>
            <person name="Barry K."/>
            <person name="Detter J.C."/>
            <person name="Glavina del Rio T."/>
            <person name="Hammon N."/>
            <person name="Israni S."/>
            <person name="Dalin E."/>
            <person name="Tice H."/>
            <person name="Pitluck S."/>
            <person name="Kiss H."/>
            <person name="Brettin T."/>
            <person name="Bruce D."/>
            <person name="Han C."/>
            <person name="Tapia R."/>
            <person name="Gilna P."/>
            <person name="Schmutz J."/>
            <person name="Larimer F."/>
            <person name="Land M."/>
            <person name="Hauser L."/>
            <person name="Kyrpides N."/>
            <person name="Mikhailova N."/>
            <person name="Nealson K."/>
            <person name="Konstantinidis K."/>
            <person name="Klappenbach J."/>
            <person name="Tiedje J."/>
            <person name="Richardson P."/>
        </authorList>
    </citation>
    <scope>NUCLEOTIDE SEQUENCE [LARGE SCALE GENOMIC DNA]</scope>
    <source>
        <strain>MR-4</strain>
    </source>
</reference>
<name>MURI_SHESM</name>
<feature type="chain" id="PRO_1000047609" description="Glutamate racemase">
    <location>
        <begin position="1"/>
        <end position="272"/>
    </location>
</feature>
<feature type="active site" description="Proton donor/acceptor" evidence="1">
    <location>
        <position position="73"/>
    </location>
</feature>
<feature type="active site" description="Proton donor/acceptor" evidence="1">
    <location>
        <position position="183"/>
    </location>
</feature>
<feature type="binding site" evidence="1">
    <location>
        <begin position="9"/>
        <end position="10"/>
    </location>
    <ligand>
        <name>substrate</name>
    </ligand>
</feature>
<feature type="binding site" evidence="1">
    <location>
        <begin position="41"/>
        <end position="42"/>
    </location>
    <ligand>
        <name>substrate</name>
    </ligand>
</feature>
<feature type="binding site" evidence="1">
    <location>
        <begin position="74"/>
        <end position="75"/>
    </location>
    <ligand>
        <name>substrate</name>
    </ligand>
</feature>
<feature type="binding site" evidence="1">
    <location>
        <begin position="184"/>
        <end position="185"/>
    </location>
    <ligand>
        <name>substrate</name>
    </ligand>
</feature>